<dbReference type="EC" id="3.1.3.11" evidence="1"/>
<dbReference type="EMBL" id="CP000438">
    <property type="protein sequence ID" value="ABJ14493.1"/>
    <property type="molecule type" value="Genomic_DNA"/>
</dbReference>
<dbReference type="RefSeq" id="WP_003110175.1">
    <property type="nucleotide sequence ID" value="NZ_CP034244.1"/>
</dbReference>
<dbReference type="SMR" id="Q02EQ6"/>
<dbReference type="KEGG" id="pau:PA14_67490"/>
<dbReference type="PseudoCAP" id="PA14_67490"/>
<dbReference type="HOGENOM" id="CLU_039977_0_0_6"/>
<dbReference type="BioCyc" id="PAER208963:G1G74-5692-MONOMER"/>
<dbReference type="UniPathway" id="UPA00138"/>
<dbReference type="Proteomes" id="UP000000653">
    <property type="component" value="Chromosome"/>
</dbReference>
<dbReference type="GO" id="GO:0005829">
    <property type="term" value="C:cytosol"/>
    <property type="evidence" value="ECO:0007669"/>
    <property type="project" value="TreeGrafter"/>
</dbReference>
<dbReference type="GO" id="GO:0042132">
    <property type="term" value="F:fructose 1,6-bisphosphate 1-phosphatase activity"/>
    <property type="evidence" value="ECO:0007669"/>
    <property type="project" value="UniProtKB-UniRule"/>
</dbReference>
<dbReference type="GO" id="GO:0000287">
    <property type="term" value="F:magnesium ion binding"/>
    <property type="evidence" value="ECO:0007669"/>
    <property type="project" value="UniProtKB-UniRule"/>
</dbReference>
<dbReference type="GO" id="GO:0030388">
    <property type="term" value="P:fructose 1,6-bisphosphate metabolic process"/>
    <property type="evidence" value="ECO:0007669"/>
    <property type="project" value="TreeGrafter"/>
</dbReference>
<dbReference type="GO" id="GO:0006002">
    <property type="term" value="P:fructose 6-phosphate metabolic process"/>
    <property type="evidence" value="ECO:0007669"/>
    <property type="project" value="TreeGrafter"/>
</dbReference>
<dbReference type="GO" id="GO:0006000">
    <property type="term" value="P:fructose metabolic process"/>
    <property type="evidence" value="ECO:0007669"/>
    <property type="project" value="TreeGrafter"/>
</dbReference>
<dbReference type="GO" id="GO:0006094">
    <property type="term" value="P:gluconeogenesis"/>
    <property type="evidence" value="ECO:0007669"/>
    <property type="project" value="UniProtKB-UniRule"/>
</dbReference>
<dbReference type="GO" id="GO:0005986">
    <property type="term" value="P:sucrose biosynthetic process"/>
    <property type="evidence" value="ECO:0007669"/>
    <property type="project" value="TreeGrafter"/>
</dbReference>
<dbReference type="CDD" id="cd00354">
    <property type="entry name" value="FBPase"/>
    <property type="match status" value="1"/>
</dbReference>
<dbReference type="FunFam" id="3.30.540.10:FF:000006">
    <property type="entry name" value="Fructose-1,6-bisphosphatase class 1"/>
    <property type="match status" value="1"/>
</dbReference>
<dbReference type="FunFam" id="3.40.190.80:FF:000011">
    <property type="entry name" value="Fructose-1,6-bisphosphatase class 1"/>
    <property type="match status" value="1"/>
</dbReference>
<dbReference type="Gene3D" id="3.40.190.80">
    <property type="match status" value="1"/>
</dbReference>
<dbReference type="Gene3D" id="3.30.540.10">
    <property type="entry name" value="Fructose-1,6-Bisphosphatase, subunit A, domain 1"/>
    <property type="match status" value="1"/>
</dbReference>
<dbReference type="HAMAP" id="MF_01855">
    <property type="entry name" value="FBPase_class1"/>
    <property type="match status" value="1"/>
</dbReference>
<dbReference type="InterPro" id="IPR044015">
    <property type="entry name" value="FBPase_C_dom"/>
</dbReference>
<dbReference type="InterPro" id="IPR000146">
    <property type="entry name" value="FBPase_class-1"/>
</dbReference>
<dbReference type="InterPro" id="IPR033391">
    <property type="entry name" value="FBPase_N"/>
</dbReference>
<dbReference type="InterPro" id="IPR028343">
    <property type="entry name" value="FBPtase"/>
</dbReference>
<dbReference type="NCBIfam" id="NF006778">
    <property type="entry name" value="PRK09293.1-1"/>
    <property type="match status" value="1"/>
</dbReference>
<dbReference type="NCBIfam" id="NF006779">
    <property type="entry name" value="PRK09293.1-3"/>
    <property type="match status" value="1"/>
</dbReference>
<dbReference type="NCBIfam" id="NF006780">
    <property type="entry name" value="PRK09293.1-4"/>
    <property type="match status" value="1"/>
</dbReference>
<dbReference type="PANTHER" id="PTHR11556">
    <property type="entry name" value="FRUCTOSE-1,6-BISPHOSPHATASE-RELATED"/>
    <property type="match status" value="1"/>
</dbReference>
<dbReference type="PANTHER" id="PTHR11556:SF35">
    <property type="entry name" value="SEDOHEPTULOSE-1,7-BISPHOSPHATASE, CHLOROPLASTIC"/>
    <property type="match status" value="1"/>
</dbReference>
<dbReference type="Pfam" id="PF00316">
    <property type="entry name" value="FBPase"/>
    <property type="match status" value="1"/>
</dbReference>
<dbReference type="Pfam" id="PF18913">
    <property type="entry name" value="FBPase_C"/>
    <property type="match status" value="1"/>
</dbReference>
<dbReference type="PIRSF" id="PIRSF500210">
    <property type="entry name" value="FBPtase"/>
    <property type="match status" value="1"/>
</dbReference>
<dbReference type="PIRSF" id="PIRSF000904">
    <property type="entry name" value="FBPtase_SBPase"/>
    <property type="match status" value="1"/>
</dbReference>
<dbReference type="PRINTS" id="PR00115">
    <property type="entry name" value="F16BPHPHTASE"/>
</dbReference>
<dbReference type="SUPFAM" id="SSF56655">
    <property type="entry name" value="Carbohydrate phosphatase"/>
    <property type="match status" value="1"/>
</dbReference>
<sequence>MSRVTLSRYLIEQTRSHNTPADLRFLIEVVARACKEISHAVSKGALGGVLGSMGTENVQGEVQKKLDVMSNEILLEANEWAGNLAGMASEEMDHPYQIPGRYPKGAYLLVFDPLDGSSNIDVNVSVGTIFSVLRCPSEYLNQNDTLREEAFLQPGTTQVAAGYAIYGPQTMLMLTLGNGVKGFTLDRELGSFVLTHDNISVPESTAEFAINMSNQRHWEAPVKRYVEELLAGKEGPLGKNYNMRWIASMVADVHRILTRGGVFMYPRDAREPEKPGKLRLMYEANPMSFIIEQAGGAATNGTQRILDIKPENLHQRVAVFLGSKQEVERITGYHAE</sequence>
<organism>
    <name type="scientific">Pseudomonas aeruginosa (strain UCBPP-PA14)</name>
    <dbReference type="NCBI Taxonomy" id="208963"/>
    <lineage>
        <taxon>Bacteria</taxon>
        <taxon>Pseudomonadati</taxon>
        <taxon>Pseudomonadota</taxon>
        <taxon>Gammaproteobacteria</taxon>
        <taxon>Pseudomonadales</taxon>
        <taxon>Pseudomonadaceae</taxon>
        <taxon>Pseudomonas</taxon>
    </lineage>
</organism>
<feature type="chain" id="PRO_0000364642" description="Fructose-1,6-bisphosphatase class 1">
    <location>
        <begin position="1"/>
        <end position="336"/>
    </location>
</feature>
<feature type="binding site" evidence="1">
    <location>
        <position position="90"/>
    </location>
    <ligand>
        <name>Mg(2+)</name>
        <dbReference type="ChEBI" id="CHEBI:18420"/>
        <label>1</label>
    </ligand>
</feature>
<feature type="binding site" evidence="1">
    <location>
        <position position="112"/>
    </location>
    <ligand>
        <name>Mg(2+)</name>
        <dbReference type="ChEBI" id="CHEBI:18420"/>
        <label>1</label>
    </ligand>
</feature>
<feature type="binding site" evidence="1">
    <location>
        <position position="112"/>
    </location>
    <ligand>
        <name>Mg(2+)</name>
        <dbReference type="ChEBI" id="CHEBI:18420"/>
        <label>2</label>
    </ligand>
</feature>
<feature type="binding site" evidence="1">
    <location>
        <position position="114"/>
    </location>
    <ligand>
        <name>Mg(2+)</name>
        <dbReference type="ChEBI" id="CHEBI:18420"/>
        <label>1</label>
    </ligand>
</feature>
<feature type="binding site" evidence="1">
    <location>
        <begin position="115"/>
        <end position="118"/>
    </location>
    <ligand>
        <name>substrate</name>
    </ligand>
</feature>
<feature type="binding site" evidence="1">
    <location>
        <position position="115"/>
    </location>
    <ligand>
        <name>Mg(2+)</name>
        <dbReference type="ChEBI" id="CHEBI:18420"/>
        <label>2</label>
    </ligand>
</feature>
<feature type="binding site" evidence="1">
    <location>
        <position position="211"/>
    </location>
    <ligand>
        <name>substrate</name>
    </ligand>
</feature>
<feature type="binding site" evidence="1">
    <location>
        <position position="277"/>
    </location>
    <ligand>
        <name>substrate</name>
    </ligand>
</feature>
<feature type="binding site" evidence="1">
    <location>
        <position position="283"/>
    </location>
    <ligand>
        <name>Mg(2+)</name>
        <dbReference type="ChEBI" id="CHEBI:18420"/>
        <label>2</label>
    </ligand>
</feature>
<keyword id="KW-0119">Carbohydrate metabolism</keyword>
<keyword id="KW-0963">Cytoplasm</keyword>
<keyword id="KW-0378">Hydrolase</keyword>
<keyword id="KW-0460">Magnesium</keyword>
<keyword id="KW-0479">Metal-binding</keyword>
<proteinExistence type="inferred from homology"/>
<name>F16PA_PSEAB</name>
<protein>
    <recommendedName>
        <fullName evidence="1">Fructose-1,6-bisphosphatase class 1</fullName>
        <shortName evidence="1">FBPase class 1</shortName>
        <ecNumber evidence="1">3.1.3.11</ecNumber>
    </recommendedName>
    <alternativeName>
        <fullName evidence="1">D-fructose-1,6-bisphosphate 1-phosphohydrolase class 1</fullName>
    </alternativeName>
</protein>
<evidence type="ECO:0000255" key="1">
    <source>
        <dbReference type="HAMAP-Rule" id="MF_01855"/>
    </source>
</evidence>
<accession>Q02EQ6</accession>
<gene>
    <name evidence="1" type="primary">fbp</name>
    <name type="ordered locus">PA14_67490</name>
</gene>
<reference key="1">
    <citation type="journal article" date="2006" name="Genome Biol.">
        <title>Genomic analysis reveals that Pseudomonas aeruginosa virulence is combinatorial.</title>
        <authorList>
            <person name="Lee D.G."/>
            <person name="Urbach J.M."/>
            <person name="Wu G."/>
            <person name="Liberati N.T."/>
            <person name="Feinbaum R.L."/>
            <person name="Miyata S."/>
            <person name="Diggins L.T."/>
            <person name="He J."/>
            <person name="Saucier M."/>
            <person name="Deziel E."/>
            <person name="Friedman L."/>
            <person name="Li L."/>
            <person name="Grills G."/>
            <person name="Montgomery K."/>
            <person name="Kucherlapati R."/>
            <person name="Rahme L.G."/>
            <person name="Ausubel F.M."/>
        </authorList>
    </citation>
    <scope>NUCLEOTIDE SEQUENCE [LARGE SCALE GENOMIC DNA]</scope>
    <source>
        <strain>UCBPP-PA14</strain>
    </source>
</reference>
<comment type="catalytic activity">
    <reaction evidence="1">
        <text>beta-D-fructose 1,6-bisphosphate + H2O = beta-D-fructose 6-phosphate + phosphate</text>
        <dbReference type="Rhea" id="RHEA:11064"/>
        <dbReference type="ChEBI" id="CHEBI:15377"/>
        <dbReference type="ChEBI" id="CHEBI:32966"/>
        <dbReference type="ChEBI" id="CHEBI:43474"/>
        <dbReference type="ChEBI" id="CHEBI:57634"/>
        <dbReference type="EC" id="3.1.3.11"/>
    </reaction>
</comment>
<comment type="cofactor">
    <cofactor evidence="1">
        <name>Mg(2+)</name>
        <dbReference type="ChEBI" id="CHEBI:18420"/>
    </cofactor>
    <text evidence="1">Binds 2 magnesium ions per subunit.</text>
</comment>
<comment type="pathway">
    <text evidence="1">Carbohydrate biosynthesis; gluconeogenesis.</text>
</comment>
<comment type="subunit">
    <text evidence="1">Homotetramer.</text>
</comment>
<comment type="subcellular location">
    <subcellularLocation>
        <location evidence="1">Cytoplasm</location>
    </subcellularLocation>
</comment>
<comment type="similarity">
    <text evidence="1">Belongs to the FBPase class 1 family.</text>
</comment>